<reference key="1">
    <citation type="submission" date="2009-05" db="EMBL/GenBank/DDBJ databases">
        <title>Complete sequence of Tolumonas auensis DSM 9187.</title>
        <authorList>
            <consortium name="US DOE Joint Genome Institute"/>
            <person name="Lucas S."/>
            <person name="Copeland A."/>
            <person name="Lapidus A."/>
            <person name="Glavina del Rio T."/>
            <person name="Tice H."/>
            <person name="Bruce D."/>
            <person name="Goodwin L."/>
            <person name="Pitluck S."/>
            <person name="Chertkov O."/>
            <person name="Brettin T."/>
            <person name="Detter J.C."/>
            <person name="Han C."/>
            <person name="Larimer F."/>
            <person name="Land M."/>
            <person name="Hauser L."/>
            <person name="Kyrpides N."/>
            <person name="Mikhailova N."/>
            <person name="Spring S."/>
            <person name="Beller H."/>
        </authorList>
    </citation>
    <scope>NUCLEOTIDE SEQUENCE [LARGE SCALE GENOMIC DNA]</scope>
    <source>
        <strain>DSM 9187 / NBRC 110442 / TA 4</strain>
    </source>
</reference>
<gene>
    <name evidence="1" type="primary">pnp</name>
    <name type="ordered locus">Tola_2242</name>
</gene>
<comment type="function">
    <text evidence="1">Involved in mRNA degradation. Catalyzes the phosphorolysis of single-stranded polyribonucleotides processively in the 3'- to 5'-direction.</text>
</comment>
<comment type="catalytic activity">
    <reaction evidence="1">
        <text>RNA(n+1) + phosphate = RNA(n) + a ribonucleoside 5'-diphosphate</text>
        <dbReference type="Rhea" id="RHEA:22096"/>
        <dbReference type="Rhea" id="RHEA-COMP:14527"/>
        <dbReference type="Rhea" id="RHEA-COMP:17342"/>
        <dbReference type="ChEBI" id="CHEBI:43474"/>
        <dbReference type="ChEBI" id="CHEBI:57930"/>
        <dbReference type="ChEBI" id="CHEBI:140395"/>
        <dbReference type="EC" id="2.7.7.8"/>
    </reaction>
</comment>
<comment type="cofactor">
    <cofactor evidence="1">
        <name>Mg(2+)</name>
        <dbReference type="ChEBI" id="CHEBI:18420"/>
    </cofactor>
</comment>
<comment type="subunit">
    <text evidence="1">Component of the RNA degradosome, which is a multiprotein complex involved in RNA processing and mRNA degradation.</text>
</comment>
<comment type="subcellular location">
    <subcellularLocation>
        <location evidence="1">Cytoplasm</location>
    </subcellularLocation>
</comment>
<comment type="similarity">
    <text evidence="1">Belongs to the polyribonucleotide nucleotidyltransferase family.</text>
</comment>
<sequence length="720" mass="77330">MNPIVKTFPYGQHTVTIETGVMARQATAAVMVSMDDTAVLVTVVGKKEAVEGRDFFPLTVNYQERTYAAGRIPGGFFKREGRPSEGETLTARLIDRPIRPLFPEGFLNEVQVVATVMSVNPAVSPDIVAMIGTSAALAISGIPFNGPIGAARVGYINDQYILNPSVVELQESKLDLVVAGTAAAVLMVESEAAILPEEVMLGAVVYGHDQLQTVIKAVNEFAAEVGTKPWNWVAPAANVTLKAKIAELAVAAIGEAYRITEKAVRYDAISALKQRIVAEIVAADETQDAGEVADLFHELESDVVRGRILRGEPRIDGRDPQMIRALSVGTGVLPRVHGSALFTRGETQALVACTLGTERDAQTIDEITGERTDRFMLHYNFPPYCVGETGMMGSPKRREIGHGRLARRGVSAVIPSQAEFPYVVRVVSEITESNGSSSMASVCGTSLALMDAGVPIKASVAGIAMGLVKEGDSFVVLSDILGDEDHLGDMDFKVAGTSEGVTALQMDIKIEGITKEIMQIALKQARDARLHILTVMDKAIGVARDDISDFAPRIHTIKINPEKIKDVIGKGGSVIRALTEETGTTIELEDDGTVKIAAVSGEAAQEAIRRIQALTADVEIGRIYEGKVTRLAEFGAFVNILPGKDGLVHISQITDERVKDVSDYLKVGDMVRTKVLEVDRQGRIRLSIKEAKRDELPAAESVAESAPAQEAVVEQVPMTE</sequence>
<evidence type="ECO:0000255" key="1">
    <source>
        <dbReference type="HAMAP-Rule" id="MF_01595"/>
    </source>
</evidence>
<evidence type="ECO:0000256" key="2">
    <source>
        <dbReference type="SAM" id="MobiDB-lite"/>
    </source>
</evidence>
<proteinExistence type="inferred from homology"/>
<accession>C4L8X0</accession>
<feature type="chain" id="PRO_1000215671" description="Polyribonucleotide nucleotidyltransferase">
    <location>
        <begin position="1"/>
        <end position="720"/>
    </location>
</feature>
<feature type="domain" description="KH" evidence="1">
    <location>
        <begin position="552"/>
        <end position="615"/>
    </location>
</feature>
<feature type="domain" description="S1 motif" evidence="1">
    <location>
        <begin position="621"/>
        <end position="689"/>
    </location>
</feature>
<feature type="region of interest" description="Disordered" evidence="2">
    <location>
        <begin position="697"/>
        <end position="720"/>
    </location>
</feature>
<feature type="compositionally biased region" description="Low complexity" evidence="2">
    <location>
        <begin position="698"/>
        <end position="720"/>
    </location>
</feature>
<feature type="binding site" evidence="1">
    <location>
        <position position="485"/>
    </location>
    <ligand>
        <name>Mg(2+)</name>
        <dbReference type="ChEBI" id="CHEBI:18420"/>
    </ligand>
</feature>
<feature type="binding site" evidence="1">
    <location>
        <position position="491"/>
    </location>
    <ligand>
        <name>Mg(2+)</name>
        <dbReference type="ChEBI" id="CHEBI:18420"/>
    </ligand>
</feature>
<protein>
    <recommendedName>
        <fullName evidence="1">Polyribonucleotide nucleotidyltransferase</fullName>
        <ecNumber evidence="1">2.7.7.8</ecNumber>
    </recommendedName>
    <alternativeName>
        <fullName evidence="1">Polynucleotide phosphorylase</fullName>
        <shortName evidence="1">PNPase</shortName>
    </alternativeName>
</protein>
<organism>
    <name type="scientific">Tolumonas auensis (strain DSM 9187 / NBRC 110442 / TA 4)</name>
    <dbReference type="NCBI Taxonomy" id="595494"/>
    <lineage>
        <taxon>Bacteria</taxon>
        <taxon>Pseudomonadati</taxon>
        <taxon>Pseudomonadota</taxon>
        <taxon>Gammaproteobacteria</taxon>
        <taxon>Aeromonadales</taxon>
        <taxon>Aeromonadaceae</taxon>
        <taxon>Tolumonas</taxon>
    </lineage>
</organism>
<name>PNP_TOLAT</name>
<dbReference type="EC" id="2.7.7.8" evidence="1"/>
<dbReference type="EMBL" id="CP001616">
    <property type="protein sequence ID" value="ACQ93840.1"/>
    <property type="molecule type" value="Genomic_DNA"/>
</dbReference>
<dbReference type="SMR" id="C4L8X0"/>
<dbReference type="STRING" id="595494.Tola_2242"/>
<dbReference type="KEGG" id="tau:Tola_2242"/>
<dbReference type="eggNOG" id="COG1185">
    <property type="taxonomic scope" value="Bacteria"/>
</dbReference>
<dbReference type="HOGENOM" id="CLU_004217_2_2_6"/>
<dbReference type="OrthoDB" id="9804305at2"/>
<dbReference type="Proteomes" id="UP000009073">
    <property type="component" value="Chromosome"/>
</dbReference>
<dbReference type="GO" id="GO:0005829">
    <property type="term" value="C:cytosol"/>
    <property type="evidence" value="ECO:0007669"/>
    <property type="project" value="TreeGrafter"/>
</dbReference>
<dbReference type="GO" id="GO:0000175">
    <property type="term" value="F:3'-5'-RNA exonuclease activity"/>
    <property type="evidence" value="ECO:0007669"/>
    <property type="project" value="TreeGrafter"/>
</dbReference>
<dbReference type="GO" id="GO:0000287">
    <property type="term" value="F:magnesium ion binding"/>
    <property type="evidence" value="ECO:0007669"/>
    <property type="project" value="UniProtKB-UniRule"/>
</dbReference>
<dbReference type="GO" id="GO:0004654">
    <property type="term" value="F:polyribonucleotide nucleotidyltransferase activity"/>
    <property type="evidence" value="ECO:0007669"/>
    <property type="project" value="UniProtKB-UniRule"/>
</dbReference>
<dbReference type="GO" id="GO:0003723">
    <property type="term" value="F:RNA binding"/>
    <property type="evidence" value="ECO:0007669"/>
    <property type="project" value="UniProtKB-UniRule"/>
</dbReference>
<dbReference type="GO" id="GO:0006402">
    <property type="term" value="P:mRNA catabolic process"/>
    <property type="evidence" value="ECO:0007669"/>
    <property type="project" value="UniProtKB-UniRule"/>
</dbReference>
<dbReference type="GO" id="GO:0006396">
    <property type="term" value="P:RNA processing"/>
    <property type="evidence" value="ECO:0007669"/>
    <property type="project" value="InterPro"/>
</dbReference>
<dbReference type="CDD" id="cd02393">
    <property type="entry name" value="KH-I_PNPase"/>
    <property type="match status" value="1"/>
</dbReference>
<dbReference type="CDD" id="cd11363">
    <property type="entry name" value="RNase_PH_PNPase_1"/>
    <property type="match status" value="1"/>
</dbReference>
<dbReference type="CDD" id="cd11364">
    <property type="entry name" value="RNase_PH_PNPase_2"/>
    <property type="match status" value="1"/>
</dbReference>
<dbReference type="CDD" id="cd04472">
    <property type="entry name" value="S1_PNPase"/>
    <property type="match status" value="1"/>
</dbReference>
<dbReference type="FunFam" id="2.40.50.140:FF:000023">
    <property type="entry name" value="Polyribonucleotide nucleotidyltransferase"/>
    <property type="match status" value="1"/>
</dbReference>
<dbReference type="FunFam" id="3.30.1370.10:FF:000001">
    <property type="entry name" value="Polyribonucleotide nucleotidyltransferase"/>
    <property type="match status" value="1"/>
</dbReference>
<dbReference type="FunFam" id="3.30.230.70:FF:000001">
    <property type="entry name" value="Polyribonucleotide nucleotidyltransferase"/>
    <property type="match status" value="1"/>
</dbReference>
<dbReference type="FunFam" id="3.30.230.70:FF:000002">
    <property type="entry name" value="Polyribonucleotide nucleotidyltransferase"/>
    <property type="match status" value="1"/>
</dbReference>
<dbReference type="Gene3D" id="3.30.230.70">
    <property type="entry name" value="GHMP Kinase, N-terminal domain"/>
    <property type="match status" value="2"/>
</dbReference>
<dbReference type="Gene3D" id="3.30.1370.10">
    <property type="entry name" value="K Homology domain, type 1"/>
    <property type="match status" value="1"/>
</dbReference>
<dbReference type="Gene3D" id="2.40.50.140">
    <property type="entry name" value="Nucleic acid-binding proteins"/>
    <property type="match status" value="1"/>
</dbReference>
<dbReference type="HAMAP" id="MF_01595">
    <property type="entry name" value="PNPase"/>
    <property type="match status" value="1"/>
</dbReference>
<dbReference type="InterPro" id="IPR001247">
    <property type="entry name" value="ExoRNase_PH_dom1"/>
</dbReference>
<dbReference type="InterPro" id="IPR015847">
    <property type="entry name" value="ExoRNase_PH_dom2"/>
</dbReference>
<dbReference type="InterPro" id="IPR036345">
    <property type="entry name" value="ExoRNase_PH_dom2_sf"/>
</dbReference>
<dbReference type="InterPro" id="IPR004087">
    <property type="entry name" value="KH_dom"/>
</dbReference>
<dbReference type="InterPro" id="IPR004088">
    <property type="entry name" value="KH_dom_type_1"/>
</dbReference>
<dbReference type="InterPro" id="IPR036612">
    <property type="entry name" value="KH_dom_type_1_sf"/>
</dbReference>
<dbReference type="InterPro" id="IPR012340">
    <property type="entry name" value="NA-bd_OB-fold"/>
</dbReference>
<dbReference type="InterPro" id="IPR012162">
    <property type="entry name" value="PNPase"/>
</dbReference>
<dbReference type="InterPro" id="IPR027408">
    <property type="entry name" value="PNPase/RNase_PH_dom_sf"/>
</dbReference>
<dbReference type="InterPro" id="IPR015848">
    <property type="entry name" value="PNPase_PH_RNA-bd_bac/org-type"/>
</dbReference>
<dbReference type="InterPro" id="IPR020568">
    <property type="entry name" value="Ribosomal_Su5_D2-typ_SF"/>
</dbReference>
<dbReference type="InterPro" id="IPR003029">
    <property type="entry name" value="S1_domain"/>
</dbReference>
<dbReference type="NCBIfam" id="TIGR03591">
    <property type="entry name" value="polynuc_phos"/>
    <property type="match status" value="1"/>
</dbReference>
<dbReference type="NCBIfam" id="NF008805">
    <property type="entry name" value="PRK11824.1"/>
    <property type="match status" value="1"/>
</dbReference>
<dbReference type="PANTHER" id="PTHR11252">
    <property type="entry name" value="POLYRIBONUCLEOTIDE NUCLEOTIDYLTRANSFERASE"/>
    <property type="match status" value="1"/>
</dbReference>
<dbReference type="PANTHER" id="PTHR11252:SF0">
    <property type="entry name" value="POLYRIBONUCLEOTIDE NUCLEOTIDYLTRANSFERASE 1, MITOCHONDRIAL"/>
    <property type="match status" value="1"/>
</dbReference>
<dbReference type="Pfam" id="PF00013">
    <property type="entry name" value="KH_1"/>
    <property type="match status" value="1"/>
</dbReference>
<dbReference type="Pfam" id="PF03726">
    <property type="entry name" value="PNPase"/>
    <property type="match status" value="1"/>
</dbReference>
<dbReference type="Pfam" id="PF01138">
    <property type="entry name" value="RNase_PH"/>
    <property type="match status" value="2"/>
</dbReference>
<dbReference type="Pfam" id="PF03725">
    <property type="entry name" value="RNase_PH_C"/>
    <property type="match status" value="2"/>
</dbReference>
<dbReference type="Pfam" id="PF00575">
    <property type="entry name" value="S1"/>
    <property type="match status" value="1"/>
</dbReference>
<dbReference type="PIRSF" id="PIRSF005499">
    <property type="entry name" value="PNPase"/>
    <property type="match status" value="1"/>
</dbReference>
<dbReference type="SMART" id="SM00322">
    <property type="entry name" value="KH"/>
    <property type="match status" value="1"/>
</dbReference>
<dbReference type="SMART" id="SM00316">
    <property type="entry name" value="S1"/>
    <property type="match status" value="1"/>
</dbReference>
<dbReference type="SUPFAM" id="SSF54791">
    <property type="entry name" value="Eukaryotic type KH-domain (KH-domain type I)"/>
    <property type="match status" value="1"/>
</dbReference>
<dbReference type="SUPFAM" id="SSF50249">
    <property type="entry name" value="Nucleic acid-binding proteins"/>
    <property type="match status" value="1"/>
</dbReference>
<dbReference type="SUPFAM" id="SSF55666">
    <property type="entry name" value="Ribonuclease PH domain 2-like"/>
    <property type="match status" value="2"/>
</dbReference>
<dbReference type="SUPFAM" id="SSF54211">
    <property type="entry name" value="Ribosomal protein S5 domain 2-like"/>
    <property type="match status" value="2"/>
</dbReference>
<dbReference type="PROSITE" id="PS50084">
    <property type="entry name" value="KH_TYPE_1"/>
    <property type="match status" value="1"/>
</dbReference>
<dbReference type="PROSITE" id="PS50126">
    <property type="entry name" value="S1"/>
    <property type="match status" value="1"/>
</dbReference>
<keyword id="KW-0963">Cytoplasm</keyword>
<keyword id="KW-0460">Magnesium</keyword>
<keyword id="KW-0479">Metal-binding</keyword>
<keyword id="KW-0548">Nucleotidyltransferase</keyword>
<keyword id="KW-1185">Reference proteome</keyword>
<keyword id="KW-0694">RNA-binding</keyword>
<keyword id="KW-0808">Transferase</keyword>